<accession>P41698</accession>
<accession>D6VYZ1</accession>
<accession>Q06482</accession>
<dbReference type="EMBL" id="L37016">
    <property type="protein sequence ID" value="AAA64518.1"/>
    <property type="molecule type" value="Genomic_DNA"/>
</dbReference>
<dbReference type="EMBL" id="U19102">
    <property type="protein sequence ID" value="AAB67749.1"/>
    <property type="molecule type" value="Genomic_DNA"/>
</dbReference>
<dbReference type="EMBL" id="BK006945">
    <property type="protein sequence ID" value="DAA09657.1"/>
    <property type="molecule type" value="Genomic_DNA"/>
</dbReference>
<dbReference type="PIR" id="S51461">
    <property type="entry name" value="S51461"/>
</dbReference>
<dbReference type="RefSeq" id="NP_013457.1">
    <property type="nucleotide sequence ID" value="NM_001182242.1"/>
</dbReference>
<dbReference type="SMR" id="P41698"/>
<dbReference type="BioGRID" id="31615">
    <property type="interactions" value="110"/>
</dbReference>
<dbReference type="DIP" id="DIP-4471N"/>
<dbReference type="FunCoup" id="P41698">
    <property type="interactions" value="47"/>
</dbReference>
<dbReference type="STRING" id="4932.YLR353W"/>
<dbReference type="GlyCosmos" id="P41698">
    <property type="glycosylation" value="8 sites, No reported glycans"/>
</dbReference>
<dbReference type="GlyGen" id="P41698">
    <property type="glycosylation" value="8 sites"/>
</dbReference>
<dbReference type="iPTMnet" id="P41698"/>
<dbReference type="PaxDb" id="4932-YLR353W"/>
<dbReference type="PeptideAtlas" id="P41698"/>
<dbReference type="EnsemblFungi" id="YLR353W_mRNA">
    <property type="protein sequence ID" value="YLR353W"/>
    <property type="gene ID" value="YLR353W"/>
</dbReference>
<dbReference type="GeneID" id="851067"/>
<dbReference type="KEGG" id="sce:YLR353W"/>
<dbReference type="AGR" id="SGD:S000004345"/>
<dbReference type="SGD" id="S000004345">
    <property type="gene designation" value="BUD8"/>
</dbReference>
<dbReference type="VEuPathDB" id="FungiDB:YLR353W"/>
<dbReference type="eggNOG" id="ENOG502S1HD">
    <property type="taxonomic scope" value="Eukaryota"/>
</dbReference>
<dbReference type="HOGENOM" id="CLU_037885_0_0_1"/>
<dbReference type="InParanoid" id="P41698"/>
<dbReference type="OMA" id="EMATVAY"/>
<dbReference type="OrthoDB" id="4068624at2759"/>
<dbReference type="BioCyc" id="YEAST:G3O-32427-MONOMER"/>
<dbReference type="BioGRID-ORCS" id="851067">
    <property type="hits" value="2 hits in 10 CRISPR screens"/>
</dbReference>
<dbReference type="PRO" id="PR:P41698"/>
<dbReference type="Proteomes" id="UP000002311">
    <property type="component" value="Chromosome XII"/>
</dbReference>
<dbReference type="RNAct" id="P41698">
    <property type="molecule type" value="protein"/>
</dbReference>
<dbReference type="GO" id="GO:0005934">
    <property type="term" value="C:cellular bud tip"/>
    <property type="evidence" value="ECO:0000314"/>
    <property type="project" value="SGD"/>
</dbReference>
<dbReference type="GO" id="GO:0000131">
    <property type="term" value="C:incipient cellular bud site"/>
    <property type="evidence" value="ECO:0000314"/>
    <property type="project" value="SGD"/>
</dbReference>
<dbReference type="GO" id="GO:0005886">
    <property type="term" value="C:plasma membrane"/>
    <property type="evidence" value="ECO:0000315"/>
    <property type="project" value="SGD"/>
</dbReference>
<dbReference type="GO" id="GO:0000282">
    <property type="term" value="P:cellular bud site selection"/>
    <property type="evidence" value="ECO:0000315"/>
    <property type="project" value="SGD"/>
</dbReference>
<dbReference type="GO" id="GO:0007124">
    <property type="term" value="P:pseudohyphal growth"/>
    <property type="evidence" value="ECO:0000315"/>
    <property type="project" value="SGD"/>
</dbReference>
<name>BUD8_YEAST</name>
<evidence type="ECO:0000255" key="1"/>
<evidence type="ECO:0000256" key="2">
    <source>
        <dbReference type="SAM" id="MobiDB-lite"/>
    </source>
</evidence>
<evidence type="ECO:0000269" key="3">
    <source>
    </source>
</evidence>
<evidence type="ECO:0000269" key="4">
    <source>
    </source>
</evidence>
<evidence type="ECO:0000269" key="5">
    <source>
    </source>
</evidence>
<evidence type="ECO:0000269" key="6">
    <source>
    </source>
</evidence>
<evidence type="ECO:0000303" key="7">
    <source>
    </source>
</evidence>
<evidence type="ECO:0000305" key="8"/>
<reference key="1">
    <citation type="journal article" date="2001" name="Mol. Biol. Cell">
        <title>Bud8p and Bud9p, proteins that may mark the sites for bipolar budding in yeast.</title>
        <authorList>
            <person name="Harkins H.A."/>
            <person name="Page N."/>
            <person name="Schenkman L.R."/>
            <person name="De Virgilio C."/>
            <person name="Shaw S."/>
            <person name="Bussey H."/>
            <person name="Pringle J.R."/>
        </authorList>
    </citation>
    <scope>NUCLEOTIDE SEQUENCE [GENOMIC DNA]</scope>
    <scope>FUNCTION</scope>
    <scope>SUBCELLULAR LOCATION</scope>
    <scope>GLYCOSYLATION</scope>
</reference>
<reference key="2">
    <citation type="journal article" date="1997" name="Nature">
        <title>The nucleotide sequence of Saccharomyces cerevisiae chromosome XII.</title>
        <authorList>
            <person name="Johnston M."/>
            <person name="Hillier L.W."/>
            <person name="Riles L."/>
            <person name="Albermann K."/>
            <person name="Andre B."/>
            <person name="Ansorge W."/>
            <person name="Benes V."/>
            <person name="Brueckner M."/>
            <person name="Delius H."/>
            <person name="Dubois E."/>
            <person name="Duesterhoeft A."/>
            <person name="Entian K.-D."/>
            <person name="Floeth M."/>
            <person name="Goffeau A."/>
            <person name="Hebling U."/>
            <person name="Heumann K."/>
            <person name="Heuss-Neitzel D."/>
            <person name="Hilbert H."/>
            <person name="Hilger F."/>
            <person name="Kleine K."/>
            <person name="Koetter P."/>
            <person name="Louis E.J."/>
            <person name="Messenguy F."/>
            <person name="Mewes H.-W."/>
            <person name="Miosga T."/>
            <person name="Moestl D."/>
            <person name="Mueller-Auer S."/>
            <person name="Nentwich U."/>
            <person name="Obermaier B."/>
            <person name="Piravandi E."/>
            <person name="Pohl T.M."/>
            <person name="Portetelle D."/>
            <person name="Purnelle B."/>
            <person name="Rechmann S."/>
            <person name="Rieger M."/>
            <person name="Rinke M."/>
            <person name="Rose M."/>
            <person name="Scharfe M."/>
            <person name="Scherens B."/>
            <person name="Scholler P."/>
            <person name="Schwager C."/>
            <person name="Schwarz S."/>
            <person name="Underwood A.P."/>
            <person name="Urrestarazu L.A."/>
            <person name="Vandenbol M."/>
            <person name="Verhasselt P."/>
            <person name="Vierendeels F."/>
            <person name="Voet M."/>
            <person name="Volckaert G."/>
            <person name="Voss H."/>
            <person name="Wambutt R."/>
            <person name="Wedler E."/>
            <person name="Wedler H."/>
            <person name="Zimmermann F.K."/>
            <person name="Zollner A."/>
            <person name="Hani J."/>
            <person name="Hoheisel J.D."/>
        </authorList>
    </citation>
    <scope>NUCLEOTIDE SEQUENCE [LARGE SCALE GENOMIC DNA]</scope>
    <source>
        <strain>ATCC 204508 / S288c</strain>
    </source>
</reference>
<reference key="3">
    <citation type="journal article" date="2014" name="G3 (Bethesda)">
        <title>The reference genome sequence of Saccharomyces cerevisiae: Then and now.</title>
        <authorList>
            <person name="Engel S.R."/>
            <person name="Dietrich F.S."/>
            <person name="Fisk D.G."/>
            <person name="Binkley G."/>
            <person name="Balakrishnan R."/>
            <person name="Costanzo M.C."/>
            <person name="Dwight S.S."/>
            <person name="Hitz B.C."/>
            <person name="Karra K."/>
            <person name="Nash R.S."/>
            <person name="Weng S."/>
            <person name="Wong E.D."/>
            <person name="Lloyd P."/>
            <person name="Skrzypek M.S."/>
            <person name="Miyasato S.R."/>
            <person name="Simison M."/>
            <person name="Cherry J.M."/>
        </authorList>
    </citation>
    <scope>GENOME REANNOTATION</scope>
    <source>
        <strain>ATCC 204508 / S288c</strain>
    </source>
</reference>
<reference key="4">
    <citation type="journal article" date="2004" name="Mol. Biol. Cell">
        <title>Interactions among Rax1p, Rax2p, Bud8p, and Bud9p in marking cortical sites for bipolar bud-site selection in yeast.</title>
        <authorList>
            <person name="Kang P.J."/>
            <person name="Angerman E."/>
            <person name="Nakashima K."/>
            <person name="Pringle J.R."/>
            <person name="Park H.-O."/>
        </authorList>
    </citation>
    <scope>INTERACTION WITH RAX1 AND RAX2</scope>
    <scope>SUBCELLULAR LOCATION</scope>
</reference>
<reference key="5">
    <citation type="journal article" date="2008" name="Mol. Cell. Proteomics">
        <title>A multidimensional chromatography technology for in-depth phosphoproteome analysis.</title>
        <authorList>
            <person name="Albuquerque C.P."/>
            <person name="Smolka M.B."/>
            <person name="Payne S.H."/>
            <person name="Bafna V."/>
            <person name="Eng J."/>
            <person name="Zhou H."/>
        </authorList>
    </citation>
    <scope>IDENTIFICATION BY MASS SPECTROMETRY [LARGE SCALE ANALYSIS]</scope>
</reference>
<reference key="6">
    <citation type="journal article" date="2009" name="Science">
        <title>Global analysis of Cdk1 substrate phosphorylation sites provides insights into evolution.</title>
        <authorList>
            <person name="Holt L.J."/>
            <person name="Tuch B.B."/>
            <person name="Villen J."/>
            <person name="Johnson A.D."/>
            <person name="Gygi S.P."/>
            <person name="Morgan D.O."/>
        </authorList>
    </citation>
    <scope>IDENTIFICATION BY MASS SPECTROMETRY [LARGE SCALE ANALYSIS]</scope>
</reference>
<reference key="7">
    <citation type="journal article" date="2010" name="Biochem. Biophys. Res. Commun.">
        <title>Subcellular localization of the interaction of bipolar landmarks Bud8p and Bud9p with Rax2p in Saccharomyces cerevisiae diploid cells.</title>
        <authorList>
            <person name="Kato Y."/>
            <person name="Kawasaki H."/>
            <person name="Arakawa N."/>
            <person name="Hirano H."/>
        </authorList>
    </citation>
    <scope>INTERACTION WITH RAX2</scope>
    <scope>SUBCELLULAR LOCATION</scope>
</reference>
<reference key="8">
    <citation type="journal article" date="2011" name="Genetics">
        <title>Cell polarity in Saccharomyces cerevisiae depends on proper localization of the Bud9 landmark protein by the EKC/KEOPS complex.</title>
        <authorList>
            <person name="Kato Y."/>
            <person name="Kawasaki H."/>
            <person name="Ohyama Y."/>
            <person name="Morishita T."/>
            <person name="Iwasaki H."/>
            <person name="Kokubo T."/>
            <person name="Hirano H."/>
        </authorList>
    </citation>
    <scope>SUBCELLULAR LOCATION</scope>
</reference>
<proteinExistence type="evidence at protein level"/>
<organism>
    <name type="scientific">Saccharomyces cerevisiae (strain ATCC 204508 / S288c)</name>
    <name type="common">Baker's yeast</name>
    <dbReference type="NCBI Taxonomy" id="559292"/>
    <lineage>
        <taxon>Eukaryota</taxon>
        <taxon>Fungi</taxon>
        <taxon>Dikarya</taxon>
        <taxon>Ascomycota</taxon>
        <taxon>Saccharomycotina</taxon>
        <taxon>Saccharomycetes</taxon>
        <taxon>Saccharomycetales</taxon>
        <taxon>Saccharomycetaceae</taxon>
        <taxon>Saccharomyces</taxon>
    </lineage>
</organism>
<keyword id="KW-0131">Cell cycle</keyword>
<keyword id="KW-1003">Cell membrane</keyword>
<keyword id="KW-0325">Glycoprotein</keyword>
<keyword id="KW-0472">Membrane</keyword>
<keyword id="KW-1185">Reference proteome</keyword>
<keyword id="KW-0812">Transmembrane</keyword>
<keyword id="KW-1133">Transmembrane helix</keyword>
<comment type="function">
    <text evidence="3">Involved in positioning the distal bud pole signal.</text>
</comment>
<comment type="subunit">
    <text evidence="4 5">Interacts with RAX1 RAX2 at the proximal or distal pole in unbudded cells.</text>
</comment>
<comment type="subcellular location">
    <subcellularLocation>
        <location evidence="3 4 5 6">Cell membrane</location>
        <topology evidence="1">Multi-pass membrane protein</topology>
    </subcellularLocation>
    <subcellularLocation>
        <location evidence="3 4 5 6">Bud tip</location>
    </subcellularLocation>
    <text evidence="3 5 6">Found at presumptive bud sites, bud tips, and the distal poles of daughter cells.</text>
</comment>
<comment type="PTM">
    <text evidence="3">N- and O-glycosylated.</text>
</comment>
<comment type="similarity">
    <text evidence="8">Belongs to the BUD8/9 family.</text>
</comment>
<gene>
    <name evidence="7" type="primary">BUD8</name>
    <name type="ordered locus">YLR353W</name>
    <name type="ORF">L9638.3</name>
</gene>
<sequence length="603" mass="66289">MIQSDEDNLDSSETTASTSYSGTSSVSSRLQLRTSLFFENLNGAHGNPDAETEMATVAYETTSRGQGFAVYINNERFSQIMGASTSSSSSSNSSSITQFHDTQDNNIPSNTTVRPTSLRRDNEDTVPLRNVTPSQNAAVRPERAVNSPSSQRLSCALTISTSVLMGEDVEGSPIEQEHSRVVSSLYSSLANRGNDESKNGTPPRPTSIEPNETTEHSFFSYHYDDTLEPDVEEAVRLTKNKTSNVNFISSTGSKGEGETEDEVIDQYEPVNESKFIPHKLKIPEKAGSIKSSTSDDSHSPGAPGTSARKIKIPQSPSLIGNILIPSHNSDSSNESSPKDHIGHNNEEKFSSKSTRKPSTSLEEEGPPIGLPSIPVLRSVSGPSKWTKTPLRLESGNSTKSDPFSRYEGHKTPSPLTKMNKKKNKTLPEHGQPLVLAPIKSQSSESDTGQNSIIEKPARSIRRKQQEKTDNRKEDRHDAENIDLEARMPIQHIDTASIHSFDSGQNGFRDVYSIENIIVILLCCSIVPPLFFIIGCSSRRKLVSDYRLMRLLMNKEHRAALLQGFIWDVDLRWFRMFCLILGAAETVIVMAGIAIGFGVGITRE</sequence>
<protein>
    <recommendedName>
        <fullName evidence="7">Bud site selection protein 8</fullName>
    </recommendedName>
</protein>
<feature type="chain" id="PRO_0000065020" description="Bud site selection protein 8">
    <location>
        <begin position="1"/>
        <end position="603"/>
    </location>
</feature>
<feature type="topological domain" description="Extracellular" evidence="1">
    <location>
        <begin position="1"/>
        <end position="515"/>
    </location>
</feature>
<feature type="transmembrane region" description="Helical" evidence="1">
    <location>
        <begin position="516"/>
        <end position="536"/>
    </location>
</feature>
<feature type="topological domain" description="Cytoplasmic" evidence="1">
    <location>
        <begin position="537"/>
        <end position="577"/>
    </location>
</feature>
<feature type="transmembrane region" description="Helical" evidence="1">
    <location>
        <begin position="578"/>
        <end position="598"/>
    </location>
</feature>
<feature type="topological domain" description="Extracellular" evidence="1">
    <location>
        <begin position="599"/>
        <end position="603"/>
    </location>
</feature>
<feature type="region of interest" description="Disordered" evidence="2">
    <location>
        <begin position="1"/>
        <end position="25"/>
    </location>
</feature>
<feature type="region of interest" description="Disordered" evidence="2">
    <location>
        <begin position="83"/>
        <end position="150"/>
    </location>
</feature>
<feature type="region of interest" description="Disordered" evidence="2">
    <location>
        <begin position="190"/>
        <end position="212"/>
    </location>
</feature>
<feature type="region of interest" description="Disordered" evidence="2">
    <location>
        <begin position="286"/>
        <end position="479"/>
    </location>
</feature>
<feature type="compositionally biased region" description="Acidic residues" evidence="2">
    <location>
        <begin position="1"/>
        <end position="10"/>
    </location>
</feature>
<feature type="compositionally biased region" description="Low complexity" evidence="2">
    <location>
        <begin position="11"/>
        <end position="25"/>
    </location>
</feature>
<feature type="compositionally biased region" description="Low complexity" evidence="2">
    <location>
        <begin position="84"/>
        <end position="95"/>
    </location>
</feature>
<feature type="compositionally biased region" description="Polar residues" evidence="2">
    <location>
        <begin position="96"/>
        <end position="115"/>
    </location>
</feature>
<feature type="compositionally biased region" description="Low complexity" evidence="2">
    <location>
        <begin position="325"/>
        <end position="335"/>
    </location>
</feature>
<feature type="compositionally biased region" description="Basic and acidic residues" evidence="2">
    <location>
        <begin position="336"/>
        <end position="350"/>
    </location>
</feature>
<feature type="compositionally biased region" description="Polar residues" evidence="2">
    <location>
        <begin position="439"/>
        <end position="452"/>
    </location>
</feature>
<feature type="compositionally biased region" description="Basic and acidic residues" evidence="2">
    <location>
        <begin position="463"/>
        <end position="479"/>
    </location>
</feature>
<feature type="glycosylation site" description="N-linked (GlcNAc...) asparagine" evidence="1">
    <location>
        <position position="92"/>
    </location>
</feature>
<feature type="glycosylation site" description="N-linked (GlcNAc...) asparagine" evidence="1">
    <location>
        <position position="110"/>
    </location>
</feature>
<feature type="glycosylation site" description="N-linked (GlcNAc...) asparagine" evidence="1">
    <location>
        <position position="211"/>
    </location>
</feature>
<feature type="glycosylation site" description="N-linked (GlcNAc...) asparagine" evidence="1">
    <location>
        <position position="240"/>
    </location>
</feature>
<feature type="glycosylation site" description="N-linked (GlcNAc...) asparagine" evidence="1">
    <location>
        <position position="271"/>
    </location>
</feature>
<feature type="glycosylation site" description="N-linked (GlcNAc...) asparagine" evidence="1">
    <location>
        <position position="333"/>
    </location>
</feature>
<feature type="glycosylation site" description="N-linked (GlcNAc...) asparagine" evidence="1">
    <location>
        <position position="396"/>
    </location>
</feature>
<feature type="glycosylation site" description="N-linked (GlcNAc...) asparagine" evidence="1">
    <location>
        <position position="423"/>
    </location>
</feature>
<feature type="sequence conflict" description="In Ref. 1; AAA64518." evidence="8" ref="1">
    <original>R</original>
    <variation>W</variation>
    <location>
        <position position="140"/>
    </location>
</feature>
<feature type="sequence conflict" description="In Ref. 1; AAA64518." evidence="8" ref="1">
    <original>V</original>
    <variation>M</variation>
    <location>
        <position position="145"/>
    </location>
</feature>
<feature type="sequence conflict" description="In Ref. 1; AAA64518." evidence="8" ref="1">
    <original>Y</original>
    <variation>C</variation>
    <location>
        <position position="221"/>
    </location>
</feature>
<feature type="sequence conflict" description="In Ref. 1; AAA64518." evidence="8" ref="1">
    <original>S</original>
    <variation>N</variation>
    <location>
        <position position="350"/>
    </location>
</feature>
<feature type="sequence conflict" description="In Ref. 1; AAA64518." evidence="8" ref="1">
    <original>T</original>
    <variation>M</variation>
    <location>
        <position position="354"/>
    </location>
</feature>
<feature type="sequence conflict" description="In Ref. 1; AAA64518." evidence="8" ref="1">
    <location>
        <position position="422"/>
    </location>
</feature>
<feature type="sequence conflict" description="In Ref. 1; AAA64518." evidence="8" ref="1">
    <original>R</original>
    <variation>L</variation>
    <location>
        <position position="602"/>
    </location>
</feature>